<sequence>MVSDFEPAGDQPTAIKDLVEGVDNNDRTQVLLGVTGSGKTFTMAKVIEETQRPALILAPNKTLAAQLYSEFKKFFPDNAVEYFVSYYDYYQPEAYVPRTDTFIEKESSINEQIDRMRHSATRSLLERDDVIIVASVSCIYGIGSVETYTAMTFQMQIGDRLDQRALLADLVAQQYKRQDINFVRGSFRVRGDTIEIFPAHLEDRAWRISMFGDEIEQITEFDPLTGQKTGELKSVKIYANSHYVTPRPTLNQAIKSIKEELKQRLVELERAGRLLEAQRLEQRTRFDLEMLEATGSCAGIENYSRYLTGRQPGDPPPTLFEYIPDNALVFIDESHVTVPQIGGMYRGDFRRKATLAEYGFRLPSCMDNRPLRFEEWDAMRPLSVAVSATPGGWEMEQSGGVFAEQVIRPTGLIDPPVEVRPAKSQVDDVVGEIRETTKAGYRTLVTVLTKRMAEDLTEYLHEQGVRVRYMHSDIDTLERIEILRDLRLGAFDVLVGINLLREGLDIPECGFVAILDADKEGFLRSETSLIQTIGRAARNVDGKVILYADQVTGSMERAMAETNRRREKQMEWNAANGITPESVKSRISDILDSVYEKDHVRADISQFTDSAGAMMGNNLKAHLDAMEKQMRDAAANLDFEKAARIRDEIKRLREMELSISEDPLAKYADMESPVSGREKGKHNKGVAKHRTAEEQERFRKLDEARAAEEAARAARPNLFRKPALDEMGADGAVPAKKPLFAKPSIDDMGPGTDMPTPAGAVSRSLFKKQSASEAHGSDFGIPGEPVRPLFKKNSLDEMTVRRTEKPVEGKVPAKPQPISHPVGAGRTDVKDRDDSAKPIVRQRAGIGSYEDPGDARREKRRPGKTGRPGK</sequence>
<name>UVRB_RHILO</name>
<dbReference type="EMBL" id="BA000012">
    <property type="protein sequence ID" value="BAB49715.1"/>
    <property type="molecule type" value="Genomic_DNA"/>
</dbReference>
<dbReference type="SMR" id="Q98I01"/>
<dbReference type="KEGG" id="mlo:mlr2631"/>
<dbReference type="eggNOG" id="COG0556">
    <property type="taxonomic scope" value="Bacteria"/>
</dbReference>
<dbReference type="HOGENOM" id="CLU_009621_0_0_5"/>
<dbReference type="Proteomes" id="UP000000552">
    <property type="component" value="Chromosome"/>
</dbReference>
<dbReference type="GO" id="GO:0005737">
    <property type="term" value="C:cytoplasm"/>
    <property type="evidence" value="ECO:0007669"/>
    <property type="project" value="UniProtKB-SubCell"/>
</dbReference>
<dbReference type="GO" id="GO:0009380">
    <property type="term" value="C:excinuclease repair complex"/>
    <property type="evidence" value="ECO:0007669"/>
    <property type="project" value="InterPro"/>
</dbReference>
<dbReference type="GO" id="GO:0005524">
    <property type="term" value="F:ATP binding"/>
    <property type="evidence" value="ECO:0007669"/>
    <property type="project" value="UniProtKB-UniRule"/>
</dbReference>
<dbReference type="GO" id="GO:0016887">
    <property type="term" value="F:ATP hydrolysis activity"/>
    <property type="evidence" value="ECO:0007669"/>
    <property type="project" value="InterPro"/>
</dbReference>
<dbReference type="GO" id="GO:0003677">
    <property type="term" value="F:DNA binding"/>
    <property type="evidence" value="ECO:0007669"/>
    <property type="project" value="UniProtKB-UniRule"/>
</dbReference>
<dbReference type="GO" id="GO:0009381">
    <property type="term" value="F:excinuclease ABC activity"/>
    <property type="evidence" value="ECO:0007669"/>
    <property type="project" value="UniProtKB-UniRule"/>
</dbReference>
<dbReference type="GO" id="GO:0006289">
    <property type="term" value="P:nucleotide-excision repair"/>
    <property type="evidence" value="ECO:0007669"/>
    <property type="project" value="UniProtKB-UniRule"/>
</dbReference>
<dbReference type="GO" id="GO:0009432">
    <property type="term" value="P:SOS response"/>
    <property type="evidence" value="ECO:0007669"/>
    <property type="project" value="UniProtKB-UniRule"/>
</dbReference>
<dbReference type="CDD" id="cd17916">
    <property type="entry name" value="DEXHc_UvrB"/>
    <property type="match status" value="1"/>
</dbReference>
<dbReference type="CDD" id="cd18790">
    <property type="entry name" value="SF2_C_UvrB"/>
    <property type="match status" value="1"/>
</dbReference>
<dbReference type="Gene3D" id="6.10.140.240">
    <property type="match status" value="1"/>
</dbReference>
<dbReference type="Gene3D" id="3.40.50.300">
    <property type="entry name" value="P-loop containing nucleotide triphosphate hydrolases"/>
    <property type="match status" value="3"/>
</dbReference>
<dbReference type="Gene3D" id="4.10.860.10">
    <property type="entry name" value="UVR domain"/>
    <property type="match status" value="1"/>
</dbReference>
<dbReference type="HAMAP" id="MF_00204">
    <property type="entry name" value="UvrB"/>
    <property type="match status" value="1"/>
</dbReference>
<dbReference type="InterPro" id="IPR006935">
    <property type="entry name" value="Helicase/UvrB_N"/>
</dbReference>
<dbReference type="InterPro" id="IPR014001">
    <property type="entry name" value="Helicase_ATP-bd"/>
</dbReference>
<dbReference type="InterPro" id="IPR001650">
    <property type="entry name" value="Helicase_C-like"/>
</dbReference>
<dbReference type="InterPro" id="IPR027417">
    <property type="entry name" value="P-loop_NTPase"/>
</dbReference>
<dbReference type="InterPro" id="IPR001943">
    <property type="entry name" value="UVR_dom"/>
</dbReference>
<dbReference type="InterPro" id="IPR036876">
    <property type="entry name" value="UVR_dom_sf"/>
</dbReference>
<dbReference type="InterPro" id="IPR004807">
    <property type="entry name" value="UvrB"/>
</dbReference>
<dbReference type="InterPro" id="IPR041471">
    <property type="entry name" value="UvrB_inter"/>
</dbReference>
<dbReference type="InterPro" id="IPR024759">
    <property type="entry name" value="UvrB_YAD/RRR_dom"/>
</dbReference>
<dbReference type="NCBIfam" id="NF003673">
    <property type="entry name" value="PRK05298.1"/>
    <property type="match status" value="1"/>
</dbReference>
<dbReference type="NCBIfam" id="TIGR00631">
    <property type="entry name" value="uvrb"/>
    <property type="match status" value="1"/>
</dbReference>
<dbReference type="PANTHER" id="PTHR24029">
    <property type="entry name" value="UVRABC SYSTEM PROTEIN B"/>
    <property type="match status" value="1"/>
</dbReference>
<dbReference type="PANTHER" id="PTHR24029:SF0">
    <property type="entry name" value="UVRABC SYSTEM PROTEIN B"/>
    <property type="match status" value="1"/>
</dbReference>
<dbReference type="Pfam" id="PF00271">
    <property type="entry name" value="Helicase_C"/>
    <property type="match status" value="1"/>
</dbReference>
<dbReference type="Pfam" id="PF04851">
    <property type="entry name" value="ResIII"/>
    <property type="match status" value="1"/>
</dbReference>
<dbReference type="Pfam" id="PF02151">
    <property type="entry name" value="UVR"/>
    <property type="match status" value="1"/>
</dbReference>
<dbReference type="Pfam" id="PF12344">
    <property type="entry name" value="UvrB"/>
    <property type="match status" value="1"/>
</dbReference>
<dbReference type="Pfam" id="PF17757">
    <property type="entry name" value="UvrB_inter"/>
    <property type="match status" value="1"/>
</dbReference>
<dbReference type="SMART" id="SM00487">
    <property type="entry name" value="DEXDc"/>
    <property type="match status" value="1"/>
</dbReference>
<dbReference type="SMART" id="SM00490">
    <property type="entry name" value="HELICc"/>
    <property type="match status" value="1"/>
</dbReference>
<dbReference type="SUPFAM" id="SSF46600">
    <property type="entry name" value="C-terminal UvrC-binding domain of UvrB"/>
    <property type="match status" value="1"/>
</dbReference>
<dbReference type="SUPFAM" id="SSF52540">
    <property type="entry name" value="P-loop containing nucleoside triphosphate hydrolases"/>
    <property type="match status" value="2"/>
</dbReference>
<dbReference type="PROSITE" id="PS51192">
    <property type="entry name" value="HELICASE_ATP_BIND_1"/>
    <property type="match status" value="1"/>
</dbReference>
<dbReference type="PROSITE" id="PS51194">
    <property type="entry name" value="HELICASE_CTER"/>
    <property type="match status" value="1"/>
</dbReference>
<dbReference type="PROSITE" id="PS50151">
    <property type="entry name" value="UVR"/>
    <property type="match status" value="1"/>
</dbReference>
<keyword id="KW-0067">ATP-binding</keyword>
<keyword id="KW-0963">Cytoplasm</keyword>
<keyword id="KW-0227">DNA damage</keyword>
<keyword id="KW-0228">DNA excision</keyword>
<keyword id="KW-0234">DNA repair</keyword>
<keyword id="KW-0267">Excision nuclease</keyword>
<keyword id="KW-0547">Nucleotide-binding</keyword>
<keyword id="KW-0742">SOS response</keyword>
<accession>Q98I01</accession>
<feature type="chain" id="PRO_0000227354" description="UvrABC system protein B">
    <location>
        <begin position="1"/>
        <end position="870"/>
    </location>
</feature>
<feature type="domain" description="Helicase ATP-binding" evidence="1">
    <location>
        <begin position="20"/>
        <end position="410"/>
    </location>
</feature>
<feature type="domain" description="Helicase C-terminal" evidence="1">
    <location>
        <begin position="425"/>
        <end position="591"/>
    </location>
</feature>
<feature type="domain" description="UVR" evidence="1">
    <location>
        <begin position="620"/>
        <end position="655"/>
    </location>
</feature>
<feature type="region of interest" description="Disordered" evidence="2">
    <location>
        <begin position="671"/>
        <end position="698"/>
    </location>
</feature>
<feature type="region of interest" description="Disordered" evidence="2">
    <location>
        <begin position="741"/>
        <end position="870"/>
    </location>
</feature>
<feature type="short sequence motif" description="Beta-hairpin">
    <location>
        <begin position="86"/>
        <end position="109"/>
    </location>
</feature>
<feature type="compositionally biased region" description="Basic residues" evidence="2">
    <location>
        <begin position="679"/>
        <end position="689"/>
    </location>
</feature>
<feature type="compositionally biased region" description="Basic and acidic residues" evidence="2">
    <location>
        <begin position="793"/>
        <end position="808"/>
    </location>
</feature>
<feature type="compositionally biased region" description="Basic and acidic residues" evidence="2">
    <location>
        <begin position="827"/>
        <end position="836"/>
    </location>
</feature>
<feature type="compositionally biased region" description="Basic residues" evidence="2">
    <location>
        <begin position="858"/>
        <end position="870"/>
    </location>
</feature>
<feature type="binding site" evidence="1">
    <location>
        <begin position="33"/>
        <end position="40"/>
    </location>
    <ligand>
        <name>ATP</name>
        <dbReference type="ChEBI" id="CHEBI:30616"/>
    </ligand>
</feature>
<comment type="function">
    <text evidence="1">The UvrABC repair system catalyzes the recognition and processing of DNA lesions. A damage recognition complex composed of 2 UvrA and 2 UvrB subunits scans DNA for abnormalities. Upon binding of the UvrA(2)B(2) complex to a putative damaged site, the DNA wraps around one UvrB monomer. DNA wrap is dependent on ATP binding by UvrB and probably causes local melting of the DNA helix, facilitating insertion of UvrB beta-hairpin between the DNA strands. Then UvrB probes one DNA strand for the presence of a lesion. If a lesion is found the UvrA subunits dissociate and the UvrB-DNA preincision complex is formed. This complex is subsequently bound by UvrC and the second UvrB is released. If no lesion is found, the DNA wraps around the other UvrB subunit that will check the other stand for damage.</text>
</comment>
<comment type="subunit">
    <text evidence="1">Forms a heterotetramer with UvrA during the search for lesions. Interacts with UvrC in an incision complex.</text>
</comment>
<comment type="subcellular location">
    <subcellularLocation>
        <location evidence="1">Cytoplasm</location>
    </subcellularLocation>
</comment>
<comment type="domain">
    <text evidence="1">The beta-hairpin motif is involved in DNA binding.</text>
</comment>
<comment type="similarity">
    <text evidence="1">Belongs to the UvrB family.</text>
</comment>
<protein>
    <recommendedName>
        <fullName evidence="1">UvrABC system protein B</fullName>
        <shortName evidence="1">Protein UvrB</shortName>
    </recommendedName>
    <alternativeName>
        <fullName evidence="1">Excinuclease ABC subunit B</fullName>
    </alternativeName>
</protein>
<proteinExistence type="inferred from homology"/>
<gene>
    <name evidence="1" type="primary">uvrB</name>
    <name type="ordered locus">mlr2631</name>
</gene>
<organism>
    <name type="scientific">Mesorhizobium japonicum (strain LMG 29417 / CECT 9101 / MAFF 303099)</name>
    <name type="common">Mesorhizobium loti (strain MAFF 303099)</name>
    <dbReference type="NCBI Taxonomy" id="266835"/>
    <lineage>
        <taxon>Bacteria</taxon>
        <taxon>Pseudomonadati</taxon>
        <taxon>Pseudomonadota</taxon>
        <taxon>Alphaproteobacteria</taxon>
        <taxon>Hyphomicrobiales</taxon>
        <taxon>Phyllobacteriaceae</taxon>
        <taxon>Mesorhizobium</taxon>
    </lineage>
</organism>
<reference key="1">
    <citation type="journal article" date="2000" name="DNA Res.">
        <title>Complete genome structure of the nitrogen-fixing symbiotic bacterium Mesorhizobium loti.</title>
        <authorList>
            <person name="Kaneko T."/>
            <person name="Nakamura Y."/>
            <person name="Sato S."/>
            <person name="Asamizu E."/>
            <person name="Kato T."/>
            <person name="Sasamoto S."/>
            <person name="Watanabe A."/>
            <person name="Idesawa K."/>
            <person name="Ishikawa A."/>
            <person name="Kawashima K."/>
            <person name="Kimura T."/>
            <person name="Kishida Y."/>
            <person name="Kiyokawa C."/>
            <person name="Kohara M."/>
            <person name="Matsumoto M."/>
            <person name="Matsuno A."/>
            <person name="Mochizuki Y."/>
            <person name="Nakayama S."/>
            <person name="Nakazaki N."/>
            <person name="Shimpo S."/>
            <person name="Sugimoto M."/>
            <person name="Takeuchi C."/>
            <person name="Yamada M."/>
            <person name="Tabata S."/>
        </authorList>
    </citation>
    <scope>NUCLEOTIDE SEQUENCE [LARGE SCALE GENOMIC DNA]</scope>
    <source>
        <strain>LMG 29417 / CECT 9101 / MAFF 303099</strain>
    </source>
</reference>
<evidence type="ECO:0000255" key="1">
    <source>
        <dbReference type="HAMAP-Rule" id="MF_00204"/>
    </source>
</evidence>
<evidence type="ECO:0000256" key="2">
    <source>
        <dbReference type="SAM" id="MobiDB-lite"/>
    </source>
</evidence>